<proteinExistence type="inferred from homology"/>
<accession>P65246</accession>
<accession>Q8XGI1</accession>
<keyword id="KW-0067">ATP-binding</keyword>
<keyword id="KW-0418">Kinase</keyword>
<keyword id="KW-0545">Nucleotide biosynthesis</keyword>
<keyword id="KW-0547">Nucleotide-binding</keyword>
<keyword id="KW-1185">Reference proteome</keyword>
<keyword id="KW-0808">Transferase</keyword>
<gene>
    <name evidence="1" type="primary">tmk</name>
    <name type="ordered locus">STM1200</name>
</gene>
<sequence length="213" mass="23724">MGSNYIVIEGLEGAGKTTARDVVVETLEQLGIRNMIFTREPGGTQLAEKLRSLVLDIRSVGDEVITDKAEVLMFYAARVQLVETVIKPALAQGVWVIGDRHDLSTQAYQGGGRGIDQTMLATLRDAVLGDFRPDLTLYLDVTPEVGLKRARARGDLDRIEQESFDFFNRTRARYLELAAQDSRIRTIDATQPLDAVMRDIRATVTKWVQEQAA</sequence>
<evidence type="ECO:0000255" key="1">
    <source>
        <dbReference type="HAMAP-Rule" id="MF_00165"/>
    </source>
</evidence>
<feature type="chain" id="PRO_0000155334" description="Thymidylate kinase">
    <location>
        <begin position="1"/>
        <end position="213"/>
    </location>
</feature>
<feature type="binding site" evidence="1">
    <location>
        <begin position="10"/>
        <end position="17"/>
    </location>
    <ligand>
        <name>ATP</name>
        <dbReference type="ChEBI" id="CHEBI:30616"/>
    </ligand>
</feature>
<organism>
    <name type="scientific">Salmonella typhimurium (strain LT2 / SGSC1412 / ATCC 700720)</name>
    <dbReference type="NCBI Taxonomy" id="99287"/>
    <lineage>
        <taxon>Bacteria</taxon>
        <taxon>Pseudomonadati</taxon>
        <taxon>Pseudomonadota</taxon>
        <taxon>Gammaproteobacteria</taxon>
        <taxon>Enterobacterales</taxon>
        <taxon>Enterobacteriaceae</taxon>
        <taxon>Salmonella</taxon>
    </lineage>
</organism>
<dbReference type="EC" id="2.7.4.9" evidence="1"/>
<dbReference type="EMBL" id="AE006468">
    <property type="protein sequence ID" value="AAL20129.1"/>
    <property type="molecule type" value="Genomic_DNA"/>
</dbReference>
<dbReference type="RefSeq" id="NP_460170.1">
    <property type="nucleotide sequence ID" value="NC_003197.2"/>
</dbReference>
<dbReference type="RefSeq" id="WP_000535399.1">
    <property type="nucleotide sequence ID" value="NC_003197.2"/>
</dbReference>
<dbReference type="SMR" id="P65246"/>
<dbReference type="STRING" id="99287.STM1200"/>
<dbReference type="PaxDb" id="99287-STM1200"/>
<dbReference type="GeneID" id="1252718"/>
<dbReference type="KEGG" id="stm:STM1200"/>
<dbReference type="PATRIC" id="fig|99287.12.peg.1269"/>
<dbReference type="HOGENOM" id="CLU_049131_0_1_6"/>
<dbReference type="OMA" id="FLYTADH"/>
<dbReference type="PhylomeDB" id="P65246"/>
<dbReference type="BioCyc" id="SENT99287:STM1200-MONOMER"/>
<dbReference type="Proteomes" id="UP000001014">
    <property type="component" value="Chromosome"/>
</dbReference>
<dbReference type="GO" id="GO:0005737">
    <property type="term" value="C:cytoplasm"/>
    <property type="evidence" value="ECO:0000318"/>
    <property type="project" value="GO_Central"/>
</dbReference>
<dbReference type="GO" id="GO:0005829">
    <property type="term" value="C:cytosol"/>
    <property type="evidence" value="ECO:0000318"/>
    <property type="project" value="GO_Central"/>
</dbReference>
<dbReference type="GO" id="GO:0005524">
    <property type="term" value="F:ATP binding"/>
    <property type="evidence" value="ECO:0007669"/>
    <property type="project" value="UniProtKB-UniRule"/>
</dbReference>
<dbReference type="GO" id="GO:0004798">
    <property type="term" value="F:dTMP kinase activity"/>
    <property type="evidence" value="ECO:0000318"/>
    <property type="project" value="GO_Central"/>
</dbReference>
<dbReference type="GO" id="GO:0006233">
    <property type="term" value="P:dTDP biosynthetic process"/>
    <property type="evidence" value="ECO:0000318"/>
    <property type="project" value="GO_Central"/>
</dbReference>
<dbReference type="GO" id="GO:0006235">
    <property type="term" value="P:dTTP biosynthetic process"/>
    <property type="evidence" value="ECO:0000318"/>
    <property type="project" value="GO_Central"/>
</dbReference>
<dbReference type="GO" id="GO:0006227">
    <property type="term" value="P:dUDP biosynthetic process"/>
    <property type="evidence" value="ECO:0000318"/>
    <property type="project" value="GO_Central"/>
</dbReference>
<dbReference type="CDD" id="cd01672">
    <property type="entry name" value="TMPK"/>
    <property type="match status" value="1"/>
</dbReference>
<dbReference type="FunFam" id="3.40.50.300:FF:000321">
    <property type="entry name" value="Thymidylate kinase"/>
    <property type="match status" value="1"/>
</dbReference>
<dbReference type="Gene3D" id="3.40.50.300">
    <property type="entry name" value="P-loop containing nucleotide triphosphate hydrolases"/>
    <property type="match status" value="1"/>
</dbReference>
<dbReference type="HAMAP" id="MF_00165">
    <property type="entry name" value="Thymidylate_kinase"/>
    <property type="match status" value="1"/>
</dbReference>
<dbReference type="InterPro" id="IPR027417">
    <property type="entry name" value="P-loop_NTPase"/>
</dbReference>
<dbReference type="InterPro" id="IPR039430">
    <property type="entry name" value="Thymidylate_kin-like_dom"/>
</dbReference>
<dbReference type="InterPro" id="IPR018095">
    <property type="entry name" value="Thymidylate_kin_CS"/>
</dbReference>
<dbReference type="InterPro" id="IPR018094">
    <property type="entry name" value="Thymidylate_kinase"/>
</dbReference>
<dbReference type="NCBIfam" id="TIGR00041">
    <property type="entry name" value="DTMP_kinase"/>
    <property type="match status" value="1"/>
</dbReference>
<dbReference type="PANTHER" id="PTHR10344">
    <property type="entry name" value="THYMIDYLATE KINASE"/>
    <property type="match status" value="1"/>
</dbReference>
<dbReference type="PANTHER" id="PTHR10344:SF4">
    <property type="entry name" value="UMP-CMP KINASE 2, MITOCHONDRIAL"/>
    <property type="match status" value="1"/>
</dbReference>
<dbReference type="Pfam" id="PF02223">
    <property type="entry name" value="Thymidylate_kin"/>
    <property type="match status" value="1"/>
</dbReference>
<dbReference type="SUPFAM" id="SSF52540">
    <property type="entry name" value="P-loop containing nucleoside triphosphate hydrolases"/>
    <property type="match status" value="1"/>
</dbReference>
<dbReference type="PROSITE" id="PS01331">
    <property type="entry name" value="THYMIDYLATE_KINASE"/>
    <property type="match status" value="1"/>
</dbReference>
<reference key="1">
    <citation type="journal article" date="2001" name="Nature">
        <title>Complete genome sequence of Salmonella enterica serovar Typhimurium LT2.</title>
        <authorList>
            <person name="McClelland M."/>
            <person name="Sanderson K.E."/>
            <person name="Spieth J."/>
            <person name="Clifton S.W."/>
            <person name="Latreille P."/>
            <person name="Courtney L."/>
            <person name="Porwollik S."/>
            <person name="Ali J."/>
            <person name="Dante M."/>
            <person name="Du F."/>
            <person name="Hou S."/>
            <person name="Layman D."/>
            <person name="Leonard S."/>
            <person name="Nguyen C."/>
            <person name="Scott K."/>
            <person name="Holmes A."/>
            <person name="Grewal N."/>
            <person name="Mulvaney E."/>
            <person name="Ryan E."/>
            <person name="Sun H."/>
            <person name="Florea L."/>
            <person name="Miller W."/>
            <person name="Stoneking T."/>
            <person name="Nhan M."/>
            <person name="Waterston R."/>
            <person name="Wilson R.K."/>
        </authorList>
    </citation>
    <scope>NUCLEOTIDE SEQUENCE [LARGE SCALE GENOMIC DNA]</scope>
    <source>
        <strain>LT2 / SGSC1412 / ATCC 700720</strain>
    </source>
</reference>
<name>KTHY_SALTY</name>
<protein>
    <recommendedName>
        <fullName evidence="1">Thymidylate kinase</fullName>
        <ecNumber evidence="1">2.7.4.9</ecNumber>
    </recommendedName>
    <alternativeName>
        <fullName evidence="1">dTMP kinase</fullName>
    </alternativeName>
</protein>
<comment type="function">
    <text evidence="1">Phosphorylation of dTMP to form dTDP in both de novo and salvage pathways of dTTP synthesis.</text>
</comment>
<comment type="catalytic activity">
    <reaction evidence="1">
        <text>dTMP + ATP = dTDP + ADP</text>
        <dbReference type="Rhea" id="RHEA:13517"/>
        <dbReference type="ChEBI" id="CHEBI:30616"/>
        <dbReference type="ChEBI" id="CHEBI:58369"/>
        <dbReference type="ChEBI" id="CHEBI:63528"/>
        <dbReference type="ChEBI" id="CHEBI:456216"/>
        <dbReference type="EC" id="2.7.4.9"/>
    </reaction>
</comment>
<comment type="similarity">
    <text evidence="1">Belongs to the thymidylate kinase family.</text>
</comment>